<keyword id="KW-0066">ATP synthesis</keyword>
<keyword id="KW-1003">Cell membrane</keyword>
<keyword id="KW-0138">CF(0)</keyword>
<keyword id="KW-0375">Hydrogen ion transport</keyword>
<keyword id="KW-0406">Ion transport</keyword>
<keyword id="KW-0446">Lipid-binding</keyword>
<keyword id="KW-0472">Membrane</keyword>
<keyword id="KW-1185">Reference proteome</keyword>
<keyword id="KW-0812">Transmembrane</keyword>
<keyword id="KW-1133">Transmembrane helix</keyword>
<keyword id="KW-0813">Transport</keyword>
<protein>
    <recommendedName>
        <fullName evidence="1">ATP synthase subunit c</fullName>
    </recommendedName>
    <alternativeName>
        <fullName evidence="1">ATP synthase F(0) sector subunit c</fullName>
    </alternativeName>
    <alternativeName>
        <fullName evidence="1">F-type ATPase subunit c</fullName>
        <shortName evidence="1">F-ATPase subunit c</shortName>
    </alternativeName>
    <alternativeName>
        <fullName evidence="1">Lipid-binding protein</fullName>
    </alternativeName>
</protein>
<feature type="chain" id="PRO_1000184421" description="ATP synthase subunit c">
    <location>
        <begin position="1"/>
        <end position="81"/>
    </location>
</feature>
<feature type="transmembrane region" description="Helical" evidence="1">
    <location>
        <begin position="5"/>
        <end position="25"/>
    </location>
</feature>
<feature type="transmembrane region" description="Helical" evidence="1">
    <location>
        <begin position="57"/>
        <end position="77"/>
    </location>
</feature>
<feature type="site" description="Reversibly protonated during proton transport" evidence="1">
    <location>
        <position position="61"/>
    </location>
</feature>
<proteinExistence type="inferred from homology"/>
<dbReference type="EMBL" id="CP000611">
    <property type="protein sequence ID" value="ABQ73054.1"/>
    <property type="molecule type" value="Genomic_DNA"/>
</dbReference>
<dbReference type="RefSeq" id="WP_003406686.1">
    <property type="nucleotide sequence ID" value="NZ_CP016972.1"/>
</dbReference>
<dbReference type="SMR" id="A5U204"/>
<dbReference type="KEGG" id="mra:MRA_1313"/>
<dbReference type="eggNOG" id="COG0636">
    <property type="taxonomic scope" value="Bacteria"/>
</dbReference>
<dbReference type="HOGENOM" id="CLU_148047_1_2_11"/>
<dbReference type="Proteomes" id="UP000001988">
    <property type="component" value="Chromosome"/>
</dbReference>
<dbReference type="GO" id="GO:0005886">
    <property type="term" value="C:plasma membrane"/>
    <property type="evidence" value="ECO:0007669"/>
    <property type="project" value="UniProtKB-SubCell"/>
</dbReference>
<dbReference type="GO" id="GO:0045259">
    <property type="term" value="C:proton-transporting ATP synthase complex"/>
    <property type="evidence" value="ECO:0007669"/>
    <property type="project" value="UniProtKB-KW"/>
</dbReference>
<dbReference type="GO" id="GO:0033177">
    <property type="term" value="C:proton-transporting two-sector ATPase complex, proton-transporting domain"/>
    <property type="evidence" value="ECO:0007669"/>
    <property type="project" value="InterPro"/>
</dbReference>
<dbReference type="GO" id="GO:0008289">
    <property type="term" value="F:lipid binding"/>
    <property type="evidence" value="ECO:0007669"/>
    <property type="project" value="UniProtKB-KW"/>
</dbReference>
<dbReference type="GO" id="GO:0046933">
    <property type="term" value="F:proton-transporting ATP synthase activity, rotational mechanism"/>
    <property type="evidence" value="ECO:0007669"/>
    <property type="project" value="UniProtKB-UniRule"/>
</dbReference>
<dbReference type="CDD" id="cd18185">
    <property type="entry name" value="ATP-synt_Fo_c_ATPE"/>
    <property type="match status" value="1"/>
</dbReference>
<dbReference type="FunFam" id="1.20.20.10:FF:000010">
    <property type="entry name" value="ATP synthase subunit c"/>
    <property type="match status" value="1"/>
</dbReference>
<dbReference type="Gene3D" id="1.20.20.10">
    <property type="entry name" value="F1F0 ATP synthase subunit C"/>
    <property type="match status" value="1"/>
</dbReference>
<dbReference type="HAMAP" id="MF_01396">
    <property type="entry name" value="ATP_synth_c_bact"/>
    <property type="match status" value="1"/>
</dbReference>
<dbReference type="InterPro" id="IPR005953">
    <property type="entry name" value="ATP_synth_csu_bac/chlpt"/>
</dbReference>
<dbReference type="InterPro" id="IPR000454">
    <property type="entry name" value="ATP_synth_F0_csu"/>
</dbReference>
<dbReference type="InterPro" id="IPR020537">
    <property type="entry name" value="ATP_synth_F0_csu_DDCD_BS"/>
</dbReference>
<dbReference type="InterPro" id="IPR038662">
    <property type="entry name" value="ATP_synth_F0_csu_sf"/>
</dbReference>
<dbReference type="InterPro" id="IPR002379">
    <property type="entry name" value="ATPase_proteolipid_c-like_dom"/>
</dbReference>
<dbReference type="InterPro" id="IPR035921">
    <property type="entry name" value="F/V-ATP_Csub_sf"/>
</dbReference>
<dbReference type="NCBIfam" id="TIGR01260">
    <property type="entry name" value="ATP_synt_c"/>
    <property type="match status" value="1"/>
</dbReference>
<dbReference type="NCBIfam" id="NF004532">
    <property type="entry name" value="PRK05880.1"/>
    <property type="match status" value="1"/>
</dbReference>
<dbReference type="Pfam" id="PF00137">
    <property type="entry name" value="ATP-synt_C"/>
    <property type="match status" value="1"/>
</dbReference>
<dbReference type="PRINTS" id="PR00124">
    <property type="entry name" value="ATPASEC"/>
</dbReference>
<dbReference type="SUPFAM" id="SSF81333">
    <property type="entry name" value="F1F0 ATP synthase subunit C"/>
    <property type="match status" value="1"/>
</dbReference>
<dbReference type="PROSITE" id="PS00605">
    <property type="entry name" value="ATPASE_C"/>
    <property type="match status" value="1"/>
</dbReference>
<evidence type="ECO:0000255" key="1">
    <source>
        <dbReference type="HAMAP-Rule" id="MF_01396"/>
    </source>
</evidence>
<gene>
    <name evidence="1" type="primary">atpE</name>
    <name type="ordered locus">MRA_1313</name>
</gene>
<reference key="1">
    <citation type="journal article" date="2008" name="PLoS ONE">
        <title>Genetic basis of virulence attenuation revealed by comparative genomic analysis of Mycobacterium tuberculosis strain H37Ra versus H37Rv.</title>
        <authorList>
            <person name="Zheng H."/>
            <person name="Lu L."/>
            <person name="Wang B."/>
            <person name="Pu S."/>
            <person name="Zhang X."/>
            <person name="Zhu G."/>
            <person name="Shi W."/>
            <person name="Zhang L."/>
            <person name="Wang H."/>
            <person name="Wang S."/>
            <person name="Zhao G."/>
            <person name="Zhang Y."/>
        </authorList>
    </citation>
    <scope>NUCLEOTIDE SEQUENCE [LARGE SCALE GENOMIC DNA]</scope>
    <source>
        <strain>ATCC 25177 / H37Ra</strain>
    </source>
</reference>
<accession>A5U204</accession>
<sequence length="81" mass="8055">MDPTIAAGALIGGGLIMAGGAIGAGIGDGVAGNALISGVARQPEAQGRLFTPFFITVGLVEAAYFINLAFMALFVFATPVK</sequence>
<organism>
    <name type="scientific">Mycobacterium tuberculosis (strain ATCC 25177 / H37Ra)</name>
    <dbReference type="NCBI Taxonomy" id="419947"/>
    <lineage>
        <taxon>Bacteria</taxon>
        <taxon>Bacillati</taxon>
        <taxon>Actinomycetota</taxon>
        <taxon>Actinomycetes</taxon>
        <taxon>Mycobacteriales</taxon>
        <taxon>Mycobacteriaceae</taxon>
        <taxon>Mycobacterium</taxon>
        <taxon>Mycobacterium tuberculosis complex</taxon>
    </lineage>
</organism>
<name>ATPL_MYCTA</name>
<comment type="function">
    <text evidence="1">F(1)F(0) ATP synthase produces ATP from ADP in the presence of a proton or sodium gradient. F-type ATPases consist of two structural domains, F(1) containing the extramembraneous catalytic core and F(0) containing the membrane proton channel, linked together by a central stalk and a peripheral stalk. During catalysis, ATP synthesis in the catalytic domain of F(1) is coupled via a rotary mechanism of the central stalk subunits to proton translocation.</text>
</comment>
<comment type="function">
    <text evidence="1">Key component of the F(0) channel; it plays a direct role in translocation across the membrane. A homomeric c-ring of between 10-14 subunits forms the central stalk rotor element with the F(1) delta and epsilon subunits.</text>
</comment>
<comment type="subunit">
    <text evidence="1">F-type ATPases have 2 components, F(1) - the catalytic core - and F(0) - the membrane proton channel. F(1) has five subunits: alpha(3), beta(3), gamma(1), delta(1), epsilon(1). F(0) has three main subunits: a(1), b(2) and c(10-14). The alpha and beta chains form an alternating ring which encloses part of the gamma chain. F(1) is attached to F(0) by a central stalk formed by the gamma and epsilon chains, while a peripheral stalk is formed by the delta and b chains.</text>
</comment>
<comment type="subcellular location">
    <subcellularLocation>
        <location evidence="1">Cell membrane</location>
        <topology evidence="1">Multi-pass membrane protein</topology>
    </subcellularLocation>
</comment>
<comment type="similarity">
    <text evidence="1">Belongs to the ATPase C chain family.</text>
</comment>